<dbReference type="EC" id="2.5.1.145" evidence="1"/>
<dbReference type="EMBL" id="AP006841">
    <property type="protein sequence ID" value="BAD51318.1"/>
    <property type="molecule type" value="Genomic_DNA"/>
</dbReference>
<dbReference type="RefSeq" id="WP_005783541.1">
    <property type="nucleotide sequence ID" value="NZ_UYXF01000012.1"/>
</dbReference>
<dbReference type="RefSeq" id="YP_101852.1">
    <property type="nucleotide sequence ID" value="NC_006347.1"/>
</dbReference>
<dbReference type="SMR" id="Q64MG9"/>
<dbReference type="STRING" id="295405.BF4581"/>
<dbReference type="GeneID" id="60366824"/>
<dbReference type="KEGG" id="bfr:BF4581"/>
<dbReference type="PATRIC" id="fig|295405.11.peg.4406"/>
<dbReference type="HOGENOM" id="CLU_013386_1_0_10"/>
<dbReference type="OrthoDB" id="871140at2"/>
<dbReference type="UniPathway" id="UPA00664"/>
<dbReference type="Proteomes" id="UP000002197">
    <property type="component" value="Chromosome"/>
</dbReference>
<dbReference type="GO" id="GO:0005886">
    <property type="term" value="C:plasma membrane"/>
    <property type="evidence" value="ECO:0007669"/>
    <property type="project" value="UniProtKB-SubCell"/>
</dbReference>
<dbReference type="GO" id="GO:0008961">
    <property type="term" value="F:phosphatidylglycerol-prolipoprotein diacylglyceryl transferase activity"/>
    <property type="evidence" value="ECO:0007669"/>
    <property type="project" value="UniProtKB-UniRule"/>
</dbReference>
<dbReference type="GO" id="GO:0042158">
    <property type="term" value="P:lipoprotein biosynthetic process"/>
    <property type="evidence" value="ECO:0007669"/>
    <property type="project" value="UniProtKB-UniRule"/>
</dbReference>
<dbReference type="HAMAP" id="MF_01147">
    <property type="entry name" value="Lgt"/>
    <property type="match status" value="1"/>
</dbReference>
<dbReference type="InterPro" id="IPR001640">
    <property type="entry name" value="Lgt"/>
</dbReference>
<dbReference type="NCBIfam" id="TIGR00544">
    <property type="entry name" value="lgt"/>
    <property type="match status" value="1"/>
</dbReference>
<dbReference type="PANTHER" id="PTHR30589:SF0">
    <property type="entry name" value="PHOSPHATIDYLGLYCEROL--PROLIPOPROTEIN DIACYLGLYCERYL TRANSFERASE"/>
    <property type="match status" value="1"/>
</dbReference>
<dbReference type="PANTHER" id="PTHR30589">
    <property type="entry name" value="PROLIPOPROTEIN DIACYLGLYCERYL TRANSFERASE"/>
    <property type="match status" value="1"/>
</dbReference>
<dbReference type="Pfam" id="PF01790">
    <property type="entry name" value="LGT"/>
    <property type="match status" value="1"/>
</dbReference>
<evidence type="ECO:0000255" key="1">
    <source>
        <dbReference type="HAMAP-Rule" id="MF_01147"/>
    </source>
</evidence>
<sequence>MNNLLLSINWNPNPELFNLFGISIRYYGLLWAIGIFFAYIVVHYQYRDKKIDEKKFEPLFFYCFFGILIGARLGHCLFYDPGYYLNHFWEMILPVKFLPGGGWKFTGYEGLASHGGTLGLIISLWLYCRKTKMNYMDVVDMIAVATPITACFIRLANLMNSEIIGKVTDVSWAFVFERVDMQPRHPAQLYEAIAYFILFLVMMFLYKNYSKKLHRGFFFGLCLTAIFTFRFFVEFLKENQVDFENSMALNMGQWLSIPFVIIGIYFMFFYGKKKSVK</sequence>
<keyword id="KW-0997">Cell inner membrane</keyword>
<keyword id="KW-1003">Cell membrane</keyword>
<keyword id="KW-0472">Membrane</keyword>
<keyword id="KW-0808">Transferase</keyword>
<keyword id="KW-0812">Transmembrane</keyword>
<keyword id="KW-1133">Transmembrane helix</keyword>
<proteinExistence type="inferred from homology"/>
<gene>
    <name evidence="1" type="primary">lgt</name>
    <name type="ordered locus">BF4581</name>
</gene>
<name>LGT_BACFR</name>
<comment type="function">
    <text evidence="1">Catalyzes the transfer of the diacylglyceryl group from phosphatidylglycerol to the sulfhydryl group of the N-terminal cysteine of a prolipoprotein, the first step in the formation of mature lipoproteins.</text>
</comment>
<comment type="catalytic activity">
    <reaction evidence="1">
        <text>L-cysteinyl-[prolipoprotein] + a 1,2-diacyl-sn-glycero-3-phospho-(1'-sn-glycerol) = an S-1,2-diacyl-sn-glyceryl-L-cysteinyl-[prolipoprotein] + sn-glycerol 1-phosphate + H(+)</text>
        <dbReference type="Rhea" id="RHEA:56712"/>
        <dbReference type="Rhea" id="RHEA-COMP:14679"/>
        <dbReference type="Rhea" id="RHEA-COMP:14680"/>
        <dbReference type="ChEBI" id="CHEBI:15378"/>
        <dbReference type="ChEBI" id="CHEBI:29950"/>
        <dbReference type="ChEBI" id="CHEBI:57685"/>
        <dbReference type="ChEBI" id="CHEBI:64716"/>
        <dbReference type="ChEBI" id="CHEBI:140658"/>
        <dbReference type="EC" id="2.5.1.145"/>
    </reaction>
</comment>
<comment type="pathway">
    <text evidence="1">Protein modification; lipoprotein biosynthesis (diacylglyceryl transfer).</text>
</comment>
<comment type="subcellular location">
    <subcellularLocation>
        <location evidence="1">Cell inner membrane</location>
        <topology evidence="1">Multi-pass membrane protein</topology>
    </subcellularLocation>
</comment>
<comment type="similarity">
    <text evidence="1">Belongs to the Lgt family.</text>
</comment>
<protein>
    <recommendedName>
        <fullName evidence="1">Phosphatidylglycerol--prolipoprotein diacylglyceryl transferase</fullName>
        <ecNumber evidence="1">2.5.1.145</ecNumber>
    </recommendedName>
</protein>
<accession>Q64MG9</accession>
<organism>
    <name type="scientific">Bacteroides fragilis (strain YCH46)</name>
    <dbReference type="NCBI Taxonomy" id="295405"/>
    <lineage>
        <taxon>Bacteria</taxon>
        <taxon>Pseudomonadati</taxon>
        <taxon>Bacteroidota</taxon>
        <taxon>Bacteroidia</taxon>
        <taxon>Bacteroidales</taxon>
        <taxon>Bacteroidaceae</taxon>
        <taxon>Bacteroides</taxon>
    </lineage>
</organism>
<feature type="chain" id="PRO_0000172551" description="Phosphatidylglycerol--prolipoprotein diacylglyceryl transferase">
    <location>
        <begin position="1"/>
        <end position="277"/>
    </location>
</feature>
<feature type="transmembrane region" description="Helical" evidence="1">
    <location>
        <begin position="22"/>
        <end position="42"/>
    </location>
</feature>
<feature type="transmembrane region" description="Helical" evidence="1">
    <location>
        <begin position="59"/>
        <end position="79"/>
    </location>
</feature>
<feature type="transmembrane region" description="Helical" evidence="1">
    <location>
        <begin position="107"/>
        <end position="127"/>
    </location>
</feature>
<feature type="transmembrane region" description="Helical" evidence="1">
    <location>
        <begin position="133"/>
        <end position="153"/>
    </location>
</feature>
<feature type="transmembrane region" description="Helical" evidence="1">
    <location>
        <begin position="186"/>
        <end position="206"/>
    </location>
</feature>
<feature type="transmembrane region" description="Helical" evidence="1">
    <location>
        <begin position="216"/>
        <end position="236"/>
    </location>
</feature>
<feature type="transmembrane region" description="Helical" evidence="1">
    <location>
        <begin position="251"/>
        <end position="271"/>
    </location>
</feature>
<feature type="binding site" evidence="1">
    <location>
        <position position="154"/>
    </location>
    <ligand>
        <name>a 1,2-diacyl-sn-glycero-3-phospho-(1'-sn-glycerol)</name>
        <dbReference type="ChEBI" id="CHEBI:64716"/>
    </ligand>
</feature>
<reference key="1">
    <citation type="journal article" date="2004" name="Proc. Natl. Acad. Sci. U.S.A.">
        <title>Genomic analysis of Bacteroides fragilis reveals extensive DNA inversions regulating cell surface adaptation.</title>
        <authorList>
            <person name="Kuwahara T."/>
            <person name="Yamashita A."/>
            <person name="Hirakawa H."/>
            <person name="Nakayama H."/>
            <person name="Toh H."/>
            <person name="Okada N."/>
            <person name="Kuhara S."/>
            <person name="Hattori M."/>
            <person name="Hayashi T."/>
            <person name="Ohnishi Y."/>
        </authorList>
    </citation>
    <scope>NUCLEOTIDE SEQUENCE [LARGE SCALE GENOMIC DNA]</scope>
    <source>
        <strain>YCH46</strain>
    </source>
</reference>